<name>LGT_CUPNH</name>
<protein>
    <recommendedName>
        <fullName evidence="1">Phosphatidylglycerol--prolipoprotein diacylglyceryl transferase</fullName>
        <ecNumber evidence="1">2.5.1.145</ecNumber>
    </recommendedName>
</protein>
<reference key="1">
    <citation type="journal article" date="2006" name="Nat. Biotechnol.">
        <title>Genome sequence of the bioplastic-producing 'Knallgas' bacterium Ralstonia eutropha H16.</title>
        <authorList>
            <person name="Pohlmann A."/>
            <person name="Fricke W.F."/>
            <person name="Reinecke F."/>
            <person name="Kusian B."/>
            <person name="Liesegang H."/>
            <person name="Cramm R."/>
            <person name="Eitinger T."/>
            <person name="Ewering C."/>
            <person name="Poetter M."/>
            <person name="Schwartz E."/>
            <person name="Strittmatter A."/>
            <person name="Voss I."/>
            <person name="Gottschalk G."/>
            <person name="Steinbuechel A."/>
            <person name="Friedrich B."/>
            <person name="Bowien B."/>
        </authorList>
    </citation>
    <scope>NUCLEOTIDE SEQUENCE [LARGE SCALE GENOMIC DNA]</scope>
    <source>
        <strain>ATCC 17699 / DSM 428 / KCTC 22496 / NCIMB 10442 / H16 / Stanier 337</strain>
    </source>
</reference>
<feature type="chain" id="PRO_1000053483" description="Phosphatidylglycerol--prolipoprotein diacylglyceryl transferase">
    <location>
        <begin position="1"/>
        <end position="272"/>
    </location>
</feature>
<feature type="transmembrane region" description="Helical" evidence="1">
    <location>
        <begin position="17"/>
        <end position="37"/>
    </location>
</feature>
<feature type="transmembrane region" description="Helical" evidence="1">
    <location>
        <begin position="59"/>
        <end position="79"/>
    </location>
</feature>
<feature type="transmembrane region" description="Helical" evidence="1">
    <location>
        <begin position="95"/>
        <end position="115"/>
    </location>
</feature>
<feature type="transmembrane region" description="Helical" evidence="1">
    <location>
        <begin position="129"/>
        <end position="149"/>
    </location>
</feature>
<feature type="transmembrane region" description="Helical" evidence="1">
    <location>
        <begin position="176"/>
        <end position="196"/>
    </location>
</feature>
<feature type="transmembrane region" description="Helical" evidence="1">
    <location>
        <begin position="202"/>
        <end position="222"/>
    </location>
</feature>
<feature type="transmembrane region" description="Helical" evidence="1">
    <location>
        <begin position="237"/>
        <end position="257"/>
    </location>
</feature>
<feature type="binding site" evidence="1">
    <location>
        <position position="142"/>
    </location>
    <ligand>
        <name>a 1,2-diacyl-sn-glycero-3-phospho-(1'-sn-glycerol)</name>
        <dbReference type="ChEBI" id="CHEBI:64716"/>
    </ligand>
</feature>
<evidence type="ECO:0000255" key="1">
    <source>
        <dbReference type="HAMAP-Rule" id="MF_01147"/>
    </source>
</evidence>
<keyword id="KW-0997">Cell inner membrane</keyword>
<keyword id="KW-1003">Cell membrane</keyword>
<keyword id="KW-0472">Membrane</keyword>
<keyword id="KW-1185">Reference proteome</keyword>
<keyword id="KW-0808">Transferase</keyword>
<keyword id="KW-0812">Transmembrane</keyword>
<keyword id="KW-1133">Transmembrane helix</keyword>
<gene>
    <name evidence="1" type="primary">lgt</name>
    <name type="ordered locus">H16_A2985</name>
</gene>
<dbReference type="EC" id="2.5.1.145" evidence="1"/>
<dbReference type="EMBL" id="AM260479">
    <property type="protein sequence ID" value="CAJ94061.1"/>
    <property type="molecule type" value="Genomic_DNA"/>
</dbReference>
<dbReference type="RefSeq" id="WP_010814932.1">
    <property type="nucleotide sequence ID" value="NZ_CP039287.1"/>
</dbReference>
<dbReference type="SMR" id="Q0K7G0"/>
<dbReference type="STRING" id="381666.H16_A2985"/>
<dbReference type="KEGG" id="reh:H16_A2985"/>
<dbReference type="eggNOG" id="COG0682">
    <property type="taxonomic scope" value="Bacteria"/>
</dbReference>
<dbReference type="HOGENOM" id="CLU_013386_1_0_4"/>
<dbReference type="OrthoDB" id="871140at2"/>
<dbReference type="UniPathway" id="UPA00664"/>
<dbReference type="Proteomes" id="UP000008210">
    <property type="component" value="Chromosome 1"/>
</dbReference>
<dbReference type="GO" id="GO:0005886">
    <property type="term" value="C:plasma membrane"/>
    <property type="evidence" value="ECO:0007669"/>
    <property type="project" value="UniProtKB-SubCell"/>
</dbReference>
<dbReference type="GO" id="GO:0008961">
    <property type="term" value="F:phosphatidylglycerol-prolipoprotein diacylglyceryl transferase activity"/>
    <property type="evidence" value="ECO:0007669"/>
    <property type="project" value="UniProtKB-UniRule"/>
</dbReference>
<dbReference type="GO" id="GO:0042158">
    <property type="term" value="P:lipoprotein biosynthetic process"/>
    <property type="evidence" value="ECO:0007669"/>
    <property type="project" value="UniProtKB-UniRule"/>
</dbReference>
<dbReference type="HAMAP" id="MF_01147">
    <property type="entry name" value="Lgt"/>
    <property type="match status" value="1"/>
</dbReference>
<dbReference type="InterPro" id="IPR001640">
    <property type="entry name" value="Lgt"/>
</dbReference>
<dbReference type="NCBIfam" id="TIGR00544">
    <property type="entry name" value="lgt"/>
    <property type="match status" value="1"/>
</dbReference>
<dbReference type="PANTHER" id="PTHR30589:SF0">
    <property type="entry name" value="PHOSPHATIDYLGLYCEROL--PROLIPOPROTEIN DIACYLGLYCERYL TRANSFERASE"/>
    <property type="match status" value="1"/>
</dbReference>
<dbReference type="PANTHER" id="PTHR30589">
    <property type="entry name" value="PROLIPOPROTEIN DIACYLGLYCERYL TRANSFERASE"/>
    <property type="match status" value="1"/>
</dbReference>
<dbReference type="Pfam" id="PF01790">
    <property type="entry name" value="LGT"/>
    <property type="match status" value="1"/>
</dbReference>
<dbReference type="PROSITE" id="PS01311">
    <property type="entry name" value="LGT"/>
    <property type="match status" value="1"/>
</dbReference>
<accession>Q0K7G0</accession>
<comment type="function">
    <text evidence="1">Catalyzes the transfer of the diacylglyceryl group from phosphatidylglycerol to the sulfhydryl group of the N-terminal cysteine of a prolipoprotein, the first step in the formation of mature lipoproteins.</text>
</comment>
<comment type="catalytic activity">
    <reaction evidence="1">
        <text>L-cysteinyl-[prolipoprotein] + a 1,2-diacyl-sn-glycero-3-phospho-(1'-sn-glycerol) = an S-1,2-diacyl-sn-glyceryl-L-cysteinyl-[prolipoprotein] + sn-glycerol 1-phosphate + H(+)</text>
        <dbReference type="Rhea" id="RHEA:56712"/>
        <dbReference type="Rhea" id="RHEA-COMP:14679"/>
        <dbReference type="Rhea" id="RHEA-COMP:14680"/>
        <dbReference type="ChEBI" id="CHEBI:15378"/>
        <dbReference type="ChEBI" id="CHEBI:29950"/>
        <dbReference type="ChEBI" id="CHEBI:57685"/>
        <dbReference type="ChEBI" id="CHEBI:64716"/>
        <dbReference type="ChEBI" id="CHEBI:140658"/>
        <dbReference type="EC" id="2.5.1.145"/>
    </reaction>
</comment>
<comment type="pathway">
    <text evidence="1">Protein modification; lipoprotein biosynthesis (diacylglyceryl transfer).</text>
</comment>
<comment type="subcellular location">
    <subcellularLocation>
        <location evidence="1">Cell inner membrane</location>
        <topology evidence="1">Multi-pass membrane protein</topology>
    </subcellularLocation>
</comment>
<comment type="similarity">
    <text evidence="1">Belongs to the Lgt family.</text>
</comment>
<organism>
    <name type="scientific">Cupriavidus necator (strain ATCC 17699 / DSM 428 / KCTC 22496 / NCIMB 10442 / H16 / Stanier 337)</name>
    <name type="common">Ralstonia eutropha</name>
    <dbReference type="NCBI Taxonomy" id="381666"/>
    <lineage>
        <taxon>Bacteria</taxon>
        <taxon>Pseudomonadati</taxon>
        <taxon>Pseudomonadota</taxon>
        <taxon>Betaproteobacteria</taxon>
        <taxon>Burkholderiales</taxon>
        <taxon>Burkholderiaceae</taxon>
        <taxon>Cupriavidus</taxon>
    </lineage>
</organism>
<proteinExistence type="inferred from homology"/>
<sequence length="272" mass="30340">MLIHPQFDPVAIHLGPLAIRWYGLMYLAGFIMFLGFGRLRIRQPHIAAKGWTTRDLDDMLFFGVLGVILGGRLGYVLFYKPSYYLAHPLEILKVWEGGMAFHGGFLGVVVAMWLFGKLRRRHWMEVTDFIAPMIPCGLAAGRIGNFINGELWGRATDLPWGMIFPQAGDNIPRHPSQLYQFAGEGVALFIVLWLFARKPRPMGAVSGVFLIGYGAFRFAAEFAREPDNFLGLLALKLSMGQWLSLPMILAGIAMVVWAYRRQPGAGASQPVA</sequence>